<comment type="function">
    <text evidence="3">Required for the formation of a threonylcarbamoyl group on adenosine at position 37 (t(6)A37) in tRNAs that read codons beginning with adenine. Likely catalyzes the conversion of L-threonine, HCO(3)(-)/CO(2) and ATP to give threonylcarbamoyl-AMP (TC-AMP) as the acyladenylate intermediate, with the release of diphosphate. Does not bind tRNA.</text>
</comment>
<comment type="catalytic activity">
    <reaction>
        <text>L-threonine + hydrogencarbonate + ATP = L-threonylcarbamoyladenylate + diphosphate + H2O</text>
        <dbReference type="Rhea" id="RHEA:36407"/>
        <dbReference type="ChEBI" id="CHEBI:15377"/>
        <dbReference type="ChEBI" id="CHEBI:17544"/>
        <dbReference type="ChEBI" id="CHEBI:30616"/>
        <dbReference type="ChEBI" id="CHEBI:33019"/>
        <dbReference type="ChEBI" id="CHEBI:57926"/>
        <dbReference type="ChEBI" id="CHEBI:73682"/>
        <dbReference type="EC" id="2.7.7.87"/>
    </reaction>
</comment>
<comment type="subcellular location">
    <subcellularLocation>
        <location evidence="4">Cytoplasm</location>
    </subcellularLocation>
</comment>
<comment type="similarity">
    <text evidence="4">Belongs to the SUA5 family.</text>
</comment>
<sequence length="340" mass="37446">MTIIINVRERIEEWKIRIAAGFIREGKLVAFPTETVYGLGANALDENAVKRIFEAKGRPADNPLIIHIASFEQLEVLAKEIPEEAEMLAKRFWPGPLTLVLPKSEVVPRVITGGLDTVAVRMPAHEIALKLIELSERPIAAPSANISGKPSPTSAHHVAEDFYGKIECIIDGGETRIGVESTVIDLTEWPPVLLRPGGLPLEEIEKVIGEIRIHPAVYGKSVDTAKAPGMKYRHYAPSAEVIVVEGPRDKVRRKIEELIAKFKEEGKKVGVIGSGSYDADEVFYLGDTVEEIARNLFKALRHMDRTGVDVILAEGVEEKGLGLAVMNRLRKASGYRIIKV</sequence>
<feature type="chain" id="PRO_0000423851" description="Threonylcarbamoyl-AMP synthase">
    <location>
        <begin position="1"/>
        <end position="340"/>
    </location>
</feature>
<feature type="domain" description="YrdC-like" evidence="2">
    <location>
        <begin position="13"/>
        <end position="199"/>
    </location>
</feature>
<feature type="binding site" evidence="1">
    <location>
        <position position="35"/>
    </location>
    <ligand>
        <name>L-threonine</name>
        <dbReference type="ChEBI" id="CHEBI:57926"/>
    </ligand>
</feature>
<feature type="binding site" evidence="1">
    <location>
        <position position="58"/>
    </location>
    <ligand>
        <name>ATP</name>
        <dbReference type="ChEBI" id="CHEBI:30616"/>
    </ligand>
</feature>
<feature type="binding site" evidence="1">
    <location>
        <position position="62"/>
    </location>
    <ligand>
        <name>ATP</name>
        <dbReference type="ChEBI" id="CHEBI:30616"/>
    </ligand>
</feature>
<feature type="binding site" evidence="1">
    <location>
        <position position="67"/>
    </location>
    <ligand>
        <name>L-threonine</name>
        <dbReference type="ChEBI" id="CHEBI:57926"/>
    </ligand>
</feature>
<feature type="binding site" evidence="1">
    <location>
        <position position="117"/>
    </location>
    <ligand>
        <name>ATP</name>
        <dbReference type="ChEBI" id="CHEBI:30616"/>
    </ligand>
</feature>
<feature type="binding site" evidence="1">
    <location>
        <position position="121"/>
    </location>
    <ligand>
        <name>L-threonine</name>
        <dbReference type="ChEBI" id="CHEBI:57926"/>
    </ligand>
</feature>
<feature type="binding site" evidence="1">
    <location>
        <position position="141"/>
    </location>
    <ligand>
        <name>L-threonine</name>
        <dbReference type="ChEBI" id="CHEBI:57926"/>
    </ligand>
</feature>
<feature type="binding site" evidence="1">
    <location>
        <position position="143"/>
    </location>
    <ligand>
        <name>ATP</name>
        <dbReference type="ChEBI" id="CHEBI:30616"/>
    </ligand>
</feature>
<feature type="binding site" evidence="1">
    <location>
        <position position="151"/>
    </location>
    <ligand>
        <name>ATP</name>
        <dbReference type="ChEBI" id="CHEBI:30616"/>
    </ligand>
</feature>
<feature type="binding site" evidence="1">
    <location>
        <position position="181"/>
    </location>
    <ligand>
        <name>L-threonine</name>
        <dbReference type="ChEBI" id="CHEBI:57926"/>
    </ligand>
</feature>
<feature type="binding site" evidence="1">
    <location>
        <position position="195"/>
    </location>
    <ligand>
        <name>ATP</name>
        <dbReference type="ChEBI" id="CHEBI:30616"/>
    </ligand>
</feature>
<feature type="binding site" evidence="1">
    <location>
        <position position="235"/>
    </location>
    <ligand>
        <name>ATP</name>
        <dbReference type="ChEBI" id="CHEBI:30616"/>
    </ligand>
</feature>
<feature type="strand" evidence="5">
    <location>
        <begin position="3"/>
        <end position="6"/>
    </location>
</feature>
<feature type="helix" evidence="5">
    <location>
        <begin position="13"/>
        <end position="24"/>
    </location>
</feature>
<feature type="strand" evidence="5">
    <location>
        <begin position="29"/>
        <end position="31"/>
    </location>
</feature>
<feature type="strand" evidence="5">
    <location>
        <begin position="34"/>
        <end position="36"/>
    </location>
</feature>
<feature type="strand" evidence="5">
    <location>
        <begin position="38"/>
        <end position="42"/>
    </location>
</feature>
<feature type="helix" evidence="5">
    <location>
        <begin position="46"/>
        <end position="56"/>
    </location>
</feature>
<feature type="strand" evidence="5">
    <location>
        <begin position="65"/>
        <end position="67"/>
    </location>
</feature>
<feature type="helix" evidence="5">
    <location>
        <begin position="72"/>
        <end position="77"/>
    </location>
</feature>
<feature type="strand" evidence="5">
    <location>
        <begin position="78"/>
        <end position="80"/>
    </location>
</feature>
<feature type="helix" evidence="5">
    <location>
        <begin position="83"/>
        <end position="92"/>
    </location>
</feature>
<feature type="strand" evidence="5">
    <location>
        <begin position="94"/>
        <end position="103"/>
    </location>
</feature>
<feature type="helix" evidence="5">
    <location>
        <begin position="109"/>
        <end position="112"/>
    </location>
</feature>
<feature type="strand" evidence="5">
    <location>
        <begin position="116"/>
        <end position="121"/>
    </location>
</feature>
<feature type="helix" evidence="5">
    <location>
        <begin position="126"/>
        <end position="135"/>
    </location>
</feature>
<feature type="strand" evidence="5">
    <location>
        <begin position="139"/>
        <end position="141"/>
    </location>
</feature>
<feature type="strand" evidence="5">
    <location>
        <begin position="143"/>
        <end position="145"/>
    </location>
</feature>
<feature type="helix" evidence="5">
    <location>
        <begin position="155"/>
        <end position="162"/>
    </location>
</feature>
<feature type="turn" evidence="5">
    <location>
        <begin position="163"/>
        <end position="165"/>
    </location>
</feature>
<feature type="strand" evidence="5">
    <location>
        <begin position="166"/>
        <end position="171"/>
    </location>
</feature>
<feature type="strand" evidence="5">
    <location>
        <begin position="182"/>
        <end position="185"/>
    </location>
</feature>
<feature type="strand" evidence="5">
    <location>
        <begin position="187"/>
        <end position="190"/>
    </location>
</feature>
<feature type="strand" evidence="5">
    <location>
        <begin position="192"/>
        <end position="195"/>
    </location>
</feature>
<feature type="helix" evidence="5">
    <location>
        <begin position="201"/>
        <end position="208"/>
    </location>
</feature>
<feature type="helix" evidence="5">
    <location>
        <begin position="215"/>
        <end position="218"/>
    </location>
</feature>
<feature type="strand" evidence="5">
    <location>
        <begin position="230"/>
        <end position="232"/>
    </location>
</feature>
<feature type="strand" evidence="5">
    <location>
        <begin position="238"/>
        <end position="246"/>
    </location>
</feature>
<feature type="helix" evidence="5">
    <location>
        <begin position="248"/>
        <end position="264"/>
    </location>
</feature>
<feature type="strand" evidence="5">
    <location>
        <begin position="269"/>
        <end position="275"/>
    </location>
</feature>
<feature type="strand" evidence="5">
    <location>
        <begin position="279"/>
        <end position="284"/>
    </location>
</feature>
<feature type="helix" evidence="5">
    <location>
        <begin position="289"/>
        <end position="304"/>
    </location>
</feature>
<feature type="strand" evidence="5">
    <location>
        <begin position="309"/>
        <end position="314"/>
    </location>
</feature>
<feature type="turn" evidence="5">
    <location>
        <begin position="319"/>
        <end position="321"/>
    </location>
</feature>
<feature type="helix" evidence="5">
    <location>
        <begin position="322"/>
        <end position="333"/>
    </location>
</feature>
<feature type="strand" evidence="5">
    <location>
        <begin position="337"/>
        <end position="339"/>
    </location>
</feature>
<proteinExistence type="evidence at protein level"/>
<organism>
    <name type="scientific">Pyrococcus abyssi (strain GE5 / Orsay)</name>
    <dbReference type="NCBI Taxonomy" id="272844"/>
    <lineage>
        <taxon>Archaea</taxon>
        <taxon>Methanobacteriati</taxon>
        <taxon>Methanobacteriota</taxon>
        <taxon>Thermococci</taxon>
        <taxon>Thermococcales</taxon>
        <taxon>Thermococcaceae</taxon>
        <taxon>Pyrococcus</taxon>
    </lineage>
</organism>
<gene>
    <name type="primary">sua5</name>
    <name type="ordered locus">PYRAB15960</name>
    <name type="ORF">PAB1302</name>
</gene>
<keyword id="KW-0002">3D-structure</keyword>
<keyword id="KW-0067">ATP-binding</keyword>
<keyword id="KW-0963">Cytoplasm</keyword>
<keyword id="KW-0547">Nucleotide-binding</keyword>
<keyword id="KW-0548">Nucleotidyltransferase</keyword>
<keyword id="KW-0808">Transferase</keyword>
<keyword id="KW-0819">tRNA processing</keyword>
<protein>
    <recommendedName>
        <fullName>Threonylcarbamoyl-AMP synthase</fullName>
        <shortName>TC-AMP synthase</shortName>
        <ecNumber>2.7.7.87</ecNumber>
    </recommendedName>
    <alternativeName>
        <fullName>L-threonylcarbamoyladenylate synthase</fullName>
    </alternativeName>
    <alternativeName>
        <fullName>t(6)A37 threonylcarbamoyladenosine biosynthesis protein Sua5</fullName>
    </alternativeName>
    <alternativeName>
        <fullName>tRNA threonylcarbamoyladenosine biosynthesis protein Sua5</fullName>
    </alternativeName>
</protein>
<reference key="1">
    <citation type="journal article" date="2003" name="Mol. Microbiol.">
        <title>An integrated analysis of the genome of the hyperthermophilic archaeon Pyrococcus abyssi.</title>
        <authorList>
            <person name="Cohen G.N."/>
            <person name="Barbe V."/>
            <person name="Flament D."/>
            <person name="Galperin M."/>
            <person name="Heilig R."/>
            <person name="Lecompte O."/>
            <person name="Poch O."/>
            <person name="Prieur D."/>
            <person name="Querellou J."/>
            <person name="Ripp R."/>
            <person name="Thierry J.-C."/>
            <person name="Van der Oost J."/>
            <person name="Weissenbach J."/>
            <person name="Zivanovic Y."/>
            <person name="Forterre P."/>
        </authorList>
    </citation>
    <scope>NUCLEOTIDE SEQUENCE [LARGE SCALE GENOMIC DNA]</scope>
    <source>
        <strain>GE5 / Orsay</strain>
    </source>
</reference>
<reference key="2">
    <citation type="journal article" date="2012" name="Curr. Microbiol.">
        <title>Re-annotation of two hyperthermophilic archaea Pyrococcus abyssi GE5 and Pyrococcus furiosus DSM 3638.</title>
        <authorList>
            <person name="Gao J."/>
            <person name="Wang J."/>
        </authorList>
    </citation>
    <scope>GENOME REANNOTATION</scope>
    <source>
        <strain>GE5 / Orsay</strain>
    </source>
</reference>
<reference key="3">
    <citation type="journal article" date="2013" name="Nucleic Acids Res.">
        <title>In vitro biosynthesis of a universal t6A tRNA modification in Archaea and Eukarya.</title>
        <authorList>
            <person name="Perrochia L."/>
            <person name="Crozat E."/>
            <person name="Hecker A."/>
            <person name="Zhang W."/>
            <person name="Bareille J."/>
            <person name="Collinet B."/>
            <person name="van Tilbeurgh H."/>
            <person name="Forterre P."/>
            <person name="Basta T."/>
        </authorList>
    </citation>
    <scope>FUNCTION IN T(6)A TRNA MODIFICATION</scope>
    <scope>LACK OF TRNA-BINDING</scope>
    <source>
        <strain>GE5 / Orsay</strain>
    </source>
</reference>
<evidence type="ECO:0000250" key="1"/>
<evidence type="ECO:0000255" key="2">
    <source>
        <dbReference type="PROSITE-ProRule" id="PRU00518"/>
    </source>
</evidence>
<evidence type="ECO:0000269" key="3">
    <source>
    </source>
</evidence>
<evidence type="ECO:0000305" key="4"/>
<evidence type="ECO:0007829" key="5">
    <source>
        <dbReference type="PDB" id="6F87"/>
    </source>
</evidence>
<name>SUA5_PYRAB</name>
<dbReference type="EC" id="2.7.7.87"/>
<dbReference type="EMBL" id="AJ248288">
    <property type="protein sequence ID" value="CAB50500.1"/>
    <property type="molecule type" value="Genomic_DNA"/>
</dbReference>
<dbReference type="EMBL" id="HE613800">
    <property type="protein sequence ID" value="CCE71055.1"/>
    <property type="molecule type" value="Genomic_DNA"/>
</dbReference>
<dbReference type="PIR" id="F75007">
    <property type="entry name" value="F75007"/>
</dbReference>
<dbReference type="RefSeq" id="WP_010868714.1">
    <property type="nucleotide sequence ID" value="NC_000868.1"/>
</dbReference>
<dbReference type="PDB" id="6F87">
    <property type="method" value="X-ray"/>
    <property type="resolution" value="2.62 A"/>
    <property type="chains" value="A/B/C/D=2-340"/>
</dbReference>
<dbReference type="PDB" id="6F89">
    <property type="method" value="X-ray"/>
    <property type="resolution" value="2.81 A"/>
    <property type="chains" value="A/B=1-340"/>
</dbReference>
<dbReference type="PDB" id="6F8Y">
    <property type="method" value="X-ray"/>
    <property type="resolution" value="2.86 A"/>
    <property type="chains" value="A/B/C/D=2-340"/>
</dbReference>
<dbReference type="PDBsum" id="6F87"/>
<dbReference type="PDBsum" id="6F89"/>
<dbReference type="PDBsum" id="6F8Y"/>
<dbReference type="SMR" id="Q9UYB2"/>
<dbReference type="STRING" id="272844.PAB1302"/>
<dbReference type="KEGG" id="pab:PAB1302"/>
<dbReference type="PATRIC" id="fig|272844.11.peg.1702"/>
<dbReference type="eggNOG" id="arCOG01952">
    <property type="taxonomic scope" value="Archaea"/>
</dbReference>
<dbReference type="HOGENOM" id="CLU_031397_0_0_2"/>
<dbReference type="OrthoDB" id="39992at2157"/>
<dbReference type="PhylomeDB" id="Q9UYB2"/>
<dbReference type="Proteomes" id="UP000000810">
    <property type="component" value="Chromosome"/>
</dbReference>
<dbReference type="Proteomes" id="UP000009139">
    <property type="component" value="Chromosome"/>
</dbReference>
<dbReference type="GO" id="GO:0005737">
    <property type="term" value="C:cytoplasm"/>
    <property type="evidence" value="ECO:0007669"/>
    <property type="project" value="UniProtKB-SubCell"/>
</dbReference>
<dbReference type="GO" id="GO:0005524">
    <property type="term" value="F:ATP binding"/>
    <property type="evidence" value="ECO:0007669"/>
    <property type="project" value="UniProtKB-KW"/>
</dbReference>
<dbReference type="GO" id="GO:0003725">
    <property type="term" value="F:double-stranded RNA binding"/>
    <property type="evidence" value="ECO:0007669"/>
    <property type="project" value="InterPro"/>
</dbReference>
<dbReference type="GO" id="GO:0061710">
    <property type="term" value="F:L-threonylcarbamoyladenylate synthase"/>
    <property type="evidence" value="ECO:0007669"/>
    <property type="project" value="UniProtKB-EC"/>
</dbReference>
<dbReference type="GO" id="GO:0006450">
    <property type="term" value="P:regulation of translational fidelity"/>
    <property type="evidence" value="ECO:0007669"/>
    <property type="project" value="TreeGrafter"/>
</dbReference>
<dbReference type="GO" id="GO:0002949">
    <property type="term" value="P:tRNA threonylcarbamoyladenosine modification"/>
    <property type="evidence" value="ECO:0000314"/>
    <property type="project" value="UniProtKB"/>
</dbReference>
<dbReference type="FunFam" id="3.40.50.11030:FF:000001">
    <property type="entry name" value="Threonylcarbamoyl-AMP synthase"/>
    <property type="match status" value="1"/>
</dbReference>
<dbReference type="FunFam" id="3.90.870.10:FF:000008">
    <property type="entry name" value="Threonylcarbamoyl-AMP synthase"/>
    <property type="match status" value="1"/>
</dbReference>
<dbReference type="Gene3D" id="3.90.870.10">
    <property type="entry name" value="DHBP synthase"/>
    <property type="match status" value="1"/>
</dbReference>
<dbReference type="Gene3D" id="3.40.50.11030">
    <property type="entry name" value="Threonylcarbamoyl-AMP synthase, C-terminal domain"/>
    <property type="match status" value="1"/>
</dbReference>
<dbReference type="InterPro" id="IPR017945">
    <property type="entry name" value="DHBP_synth_RibB-like_a/b_dom"/>
</dbReference>
<dbReference type="InterPro" id="IPR006070">
    <property type="entry name" value="Sua5-like_dom"/>
</dbReference>
<dbReference type="InterPro" id="IPR038385">
    <property type="entry name" value="Sua5/YwlC_C"/>
</dbReference>
<dbReference type="InterPro" id="IPR005145">
    <property type="entry name" value="Sua5_C"/>
</dbReference>
<dbReference type="InterPro" id="IPR010923">
    <property type="entry name" value="T(6)A37_SUA5"/>
</dbReference>
<dbReference type="InterPro" id="IPR050156">
    <property type="entry name" value="TC-AMP_synthase_SUA5"/>
</dbReference>
<dbReference type="NCBIfam" id="TIGR00057">
    <property type="entry name" value="L-threonylcarbamoyladenylate synthase"/>
    <property type="match status" value="1"/>
</dbReference>
<dbReference type="PANTHER" id="PTHR17490">
    <property type="entry name" value="SUA5"/>
    <property type="match status" value="1"/>
</dbReference>
<dbReference type="PANTHER" id="PTHR17490:SF16">
    <property type="entry name" value="THREONYLCARBAMOYL-AMP SYNTHASE"/>
    <property type="match status" value="1"/>
</dbReference>
<dbReference type="Pfam" id="PF03481">
    <property type="entry name" value="Sua5_C"/>
    <property type="match status" value="1"/>
</dbReference>
<dbReference type="Pfam" id="PF01300">
    <property type="entry name" value="Sua5_yciO_yrdC"/>
    <property type="match status" value="1"/>
</dbReference>
<dbReference type="PIRSF" id="PIRSF004930">
    <property type="entry name" value="Tln_factor_SUA5"/>
    <property type="match status" value="1"/>
</dbReference>
<dbReference type="SUPFAM" id="SSF55821">
    <property type="entry name" value="YrdC/RibB"/>
    <property type="match status" value="1"/>
</dbReference>
<dbReference type="PROSITE" id="PS51163">
    <property type="entry name" value="YRDC"/>
    <property type="match status" value="1"/>
</dbReference>
<accession>Q9UYB2</accession>